<organism>
    <name type="scientific">Mus musculus</name>
    <name type="common">Mouse</name>
    <dbReference type="NCBI Taxonomy" id="10090"/>
    <lineage>
        <taxon>Eukaryota</taxon>
        <taxon>Metazoa</taxon>
        <taxon>Chordata</taxon>
        <taxon>Craniata</taxon>
        <taxon>Vertebrata</taxon>
        <taxon>Euteleostomi</taxon>
        <taxon>Mammalia</taxon>
        <taxon>Eutheria</taxon>
        <taxon>Euarchontoglires</taxon>
        <taxon>Glires</taxon>
        <taxon>Rodentia</taxon>
        <taxon>Myomorpha</taxon>
        <taxon>Muroidea</taxon>
        <taxon>Muridae</taxon>
        <taxon>Murinae</taxon>
        <taxon>Mus</taxon>
        <taxon>Mus</taxon>
    </lineage>
</organism>
<feature type="chain" id="PRO_0000074085" description="Deformed epidermal autoregulatory factor 1 homolog">
    <location>
        <begin position="1"/>
        <end position="566"/>
    </location>
</feature>
<feature type="domain" description="SAND" evidence="6">
    <location>
        <begin position="194"/>
        <end position="274"/>
    </location>
</feature>
<feature type="zinc finger region" description="MYND-type" evidence="5">
    <location>
        <begin position="505"/>
        <end position="541"/>
    </location>
</feature>
<feature type="region of interest" description="Disordered" evidence="7">
    <location>
        <begin position="33"/>
        <end position="62"/>
    </location>
</feature>
<feature type="region of interest" description="Disordered" evidence="7">
    <location>
        <begin position="163"/>
        <end position="191"/>
    </location>
</feature>
<feature type="region of interest" description="Interaction with LMO4">
    <location>
        <begin position="404"/>
        <end position="479"/>
    </location>
</feature>
<feature type="short sequence motif" description="Nuclear localization signal" evidence="4">
    <location>
        <begin position="300"/>
        <end position="306"/>
    </location>
</feature>
<feature type="compositionally biased region" description="Pro residues" evidence="7">
    <location>
        <begin position="170"/>
        <end position="182"/>
    </location>
</feature>
<feature type="binding site" evidence="5">
    <location>
        <position position="505"/>
    </location>
    <ligand>
        <name>Zn(2+)</name>
        <dbReference type="ChEBI" id="CHEBI:29105"/>
        <label>1</label>
    </ligand>
</feature>
<feature type="binding site" evidence="5">
    <location>
        <position position="508"/>
    </location>
    <ligand>
        <name>Zn(2+)</name>
        <dbReference type="ChEBI" id="CHEBI:29105"/>
        <label>1</label>
    </ligand>
</feature>
<feature type="binding site" evidence="5">
    <location>
        <position position="516"/>
    </location>
    <ligand>
        <name>Zn(2+)</name>
        <dbReference type="ChEBI" id="CHEBI:29105"/>
        <label>2</label>
    </ligand>
</feature>
<feature type="binding site" evidence="5">
    <location>
        <position position="519"/>
    </location>
    <ligand>
        <name>Zn(2+)</name>
        <dbReference type="ChEBI" id="CHEBI:29105"/>
        <label>2</label>
    </ligand>
</feature>
<feature type="binding site" evidence="5">
    <location>
        <position position="525"/>
    </location>
    <ligand>
        <name>Zn(2+)</name>
        <dbReference type="ChEBI" id="CHEBI:29105"/>
        <label>1</label>
    </ligand>
</feature>
<feature type="binding site" evidence="5">
    <location>
        <position position="529"/>
    </location>
    <ligand>
        <name>Zn(2+)</name>
        <dbReference type="ChEBI" id="CHEBI:29105"/>
        <label>1</label>
    </ligand>
</feature>
<feature type="binding site" evidence="5">
    <location>
        <position position="537"/>
    </location>
    <ligand>
        <name>Zn(2+)</name>
        <dbReference type="ChEBI" id="CHEBI:29105"/>
        <label>2</label>
    </ligand>
</feature>
<feature type="binding site" evidence="5">
    <location>
        <position position="541"/>
    </location>
    <ligand>
        <name>Zn(2+)</name>
        <dbReference type="ChEBI" id="CHEBI:29105"/>
        <label>2</label>
    </ligand>
</feature>
<feature type="modified residue" description="Phosphothreonine" evidence="15">
    <location>
        <position position="172"/>
    </location>
</feature>
<feature type="modified residue" description="Phosphoserine" evidence="15">
    <location>
        <position position="177"/>
    </location>
</feature>
<feature type="modified residue" description="Phosphothreonine" evidence="15">
    <location>
        <position position="180"/>
    </location>
</feature>
<feature type="modified residue" description="Phosphothreonine" evidence="2">
    <location>
        <position position="433"/>
    </location>
</feature>
<feature type="modified residue" description="Phosphoserine" evidence="3">
    <location>
        <position position="444"/>
    </location>
</feature>
<feature type="modified residue" description="Phosphoserine" evidence="3">
    <location>
        <position position="449"/>
    </location>
</feature>
<feature type="splice variant" id="VSP_038703" description="In isoform 2." evidence="14">
    <location>
        <begin position="19"/>
        <end position="32"/>
    </location>
</feature>
<feature type="splice variant" id="VSP_038704" description="In isoform 2." evidence="14">
    <original>SGPVRLFVPYKRRKKEN</original>
    <variation>AGVSLFSFPWPTSLLRI</variation>
    <location>
        <begin position="292"/>
        <end position="308"/>
    </location>
</feature>
<feature type="splice variant" id="VSP_038705" description="In isoform 2." evidence="14">
    <location>
        <begin position="309"/>
        <end position="566"/>
    </location>
</feature>
<feature type="mutagenesis site" description="Abolishes nuclear localization." evidence="11">
    <original>K</original>
    <variation>T</variation>
    <location>
        <position position="305"/>
    </location>
</feature>
<evidence type="ECO:0000250" key="1"/>
<evidence type="ECO:0000250" key="2">
    <source>
        <dbReference type="UniProtKB" id="O75398"/>
    </source>
</evidence>
<evidence type="ECO:0000250" key="3">
    <source>
        <dbReference type="UniProtKB" id="O88450"/>
    </source>
</evidence>
<evidence type="ECO:0000255" key="4"/>
<evidence type="ECO:0000255" key="5">
    <source>
        <dbReference type="PROSITE-ProRule" id="PRU00134"/>
    </source>
</evidence>
<evidence type="ECO:0000255" key="6">
    <source>
        <dbReference type="PROSITE-ProRule" id="PRU00185"/>
    </source>
</evidence>
<evidence type="ECO:0000256" key="7">
    <source>
        <dbReference type="SAM" id="MobiDB-lite"/>
    </source>
</evidence>
<evidence type="ECO:0000269" key="8">
    <source>
    </source>
</evidence>
<evidence type="ECO:0000269" key="9">
    <source>
    </source>
</evidence>
<evidence type="ECO:0000269" key="10">
    <source>
    </source>
</evidence>
<evidence type="ECO:0000269" key="11">
    <source>
    </source>
</evidence>
<evidence type="ECO:0000269" key="12">
    <source>
    </source>
</evidence>
<evidence type="ECO:0000269" key="13">
    <source>
    </source>
</evidence>
<evidence type="ECO:0000303" key="14">
    <source>
    </source>
</evidence>
<evidence type="ECO:0007744" key="15">
    <source>
    </source>
</evidence>
<name>DEAF1_MOUSE</name>
<dbReference type="EMBL" id="AF102818">
    <property type="protein sequence ID" value="AAC98511.1"/>
    <property type="molecule type" value="mRNA"/>
</dbReference>
<dbReference type="EMBL" id="FJ377318">
    <property type="protein sequence ID" value="ACN61629.1"/>
    <property type="molecule type" value="mRNA"/>
</dbReference>
<dbReference type="EMBL" id="FJ377319">
    <property type="protein sequence ID" value="ACN61630.1"/>
    <property type="molecule type" value="mRNA"/>
</dbReference>
<dbReference type="EMBL" id="AK146546">
    <property type="protein sequence ID" value="BAE27251.1"/>
    <property type="molecule type" value="mRNA"/>
</dbReference>
<dbReference type="EMBL" id="CH466531">
    <property type="protein sequence ID" value="EDL18044.1"/>
    <property type="molecule type" value="Genomic_DNA"/>
</dbReference>
<dbReference type="CCDS" id="CCDS40185.1">
    <molecule id="Q9Z1T5-1"/>
</dbReference>
<dbReference type="RefSeq" id="NP_058570.1">
    <molecule id="Q9Z1T5-1"/>
    <property type="nucleotide sequence ID" value="NM_016874.3"/>
</dbReference>
<dbReference type="PDB" id="2MBV">
    <property type="method" value="NMR"/>
    <property type="chains" value="A=404-418"/>
</dbReference>
<dbReference type="PDBsum" id="2MBV"/>
<dbReference type="BMRB" id="Q9Z1T5"/>
<dbReference type="SMR" id="Q9Z1T5"/>
<dbReference type="BioGRID" id="207558">
    <property type="interactions" value="26"/>
</dbReference>
<dbReference type="FunCoup" id="Q9Z1T5">
    <property type="interactions" value="3337"/>
</dbReference>
<dbReference type="IntAct" id="Q9Z1T5">
    <property type="interactions" value="3"/>
</dbReference>
<dbReference type="MINT" id="Q9Z1T5"/>
<dbReference type="STRING" id="10090.ENSMUSP00000079395"/>
<dbReference type="GlyGen" id="Q9Z1T5">
    <property type="glycosylation" value="2 sites, 1 O-linked glycan (1 site)"/>
</dbReference>
<dbReference type="iPTMnet" id="Q9Z1T5"/>
<dbReference type="PhosphoSitePlus" id="Q9Z1T5"/>
<dbReference type="jPOST" id="Q9Z1T5"/>
<dbReference type="PaxDb" id="10090-ENSMUSP00000079395"/>
<dbReference type="ProteomicsDB" id="277973">
    <molecule id="Q9Z1T5-1"/>
</dbReference>
<dbReference type="ProteomicsDB" id="277974">
    <molecule id="Q9Z1T5-2"/>
</dbReference>
<dbReference type="Antibodypedia" id="9854">
    <property type="antibodies" value="334 antibodies from 31 providers"/>
</dbReference>
<dbReference type="DNASU" id="54006"/>
<dbReference type="Ensembl" id="ENSMUST00000080553.9">
    <molecule id="Q9Z1T5-1"/>
    <property type="protein sequence ID" value="ENSMUSP00000079395.8"/>
    <property type="gene ID" value="ENSMUSG00000058886.10"/>
</dbReference>
<dbReference type="GeneID" id="54006"/>
<dbReference type="KEGG" id="mmu:54006"/>
<dbReference type="UCSC" id="uc009kkn.2">
    <molecule id="Q9Z1T5-1"/>
    <property type="organism name" value="mouse"/>
</dbReference>
<dbReference type="AGR" id="MGI:1858496"/>
<dbReference type="CTD" id="10522"/>
<dbReference type="MGI" id="MGI:1858496">
    <property type="gene designation" value="Deaf1"/>
</dbReference>
<dbReference type="VEuPathDB" id="HostDB:ENSMUSG00000058886"/>
<dbReference type="eggNOG" id="KOG4333">
    <property type="taxonomic scope" value="Eukaryota"/>
</dbReference>
<dbReference type="GeneTree" id="ENSGT00940000159701"/>
<dbReference type="HOGENOM" id="CLU_039056_1_0_1"/>
<dbReference type="InParanoid" id="Q9Z1T5"/>
<dbReference type="OMA" id="KDHQHSC"/>
<dbReference type="OrthoDB" id="75406at9989"/>
<dbReference type="PhylomeDB" id="Q9Z1T5"/>
<dbReference type="TreeFam" id="TF325664"/>
<dbReference type="BioGRID-ORCS" id="54006">
    <property type="hits" value="2 hits in 83 CRISPR screens"/>
</dbReference>
<dbReference type="ChiTaRS" id="Deaf1">
    <property type="organism name" value="mouse"/>
</dbReference>
<dbReference type="EvolutionaryTrace" id="Q9Z1T5"/>
<dbReference type="PRO" id="PR:Q9Z1T5"/>
<dbReference type="Proteomes" id="UP000000589">
    <property type="component" value="Chromosome 7"/>
</dbReference>
<dbReference type="RNAct" id="Q9Z1T5">
    <property type="molecule type" value="protein"/>
</dbReference>
<dbReference type="Bgee" id="ENSMUSG00000058886">
    <property type="expression patterns" value="Expressed in embryonic brain and 254 other cell types or tissues"/>
</dbReference>
<dbReference type="ExpressionAtlas" id="Q9Z1T5">
    <property type="expression patterns" value="baseline and differential"/>
</dbReference>
<dbReference type="GO" id="GO:0005737">
    <property type="term" value="C:cytoplasm"/>
    <property type="evidence" value="ECO:0000314"/>
    <property type="project" value="UniProtKB"/>
</dbReference>
<dbReference type="GO" id="GO:0001650">
    <property type="term" value="C:fibrillar center"/>
    <property type="evidence" value="ECO:0007669"/>
    <property type="project" value="Ensembl"/>
</dbReference>
<dbReference type="GO" id="GO:0005654">
    <property type="term" value="C:nucleoplasm"/>
    <property type="evidence" value="ECO:0007669"/>
    <property type="project" value="Ensembl"/>
</dbReference>
<dbReference type="GO" id="GO:0005634">
    <property type="term" value="C:nucleus"/>
    <property type="evidence" value="ECO:0000314"/>
    <property type="project" value="UniProtKB"/>
</dbReference>
<dbReference type="GO" id="GO:0090575">
    <property type="term" value="C:RNA polymerase II transcription regulator complex"/>
    <property type="evidence" value="ECO:0000314"/>
    <property type="project" value="MGI"/>
</dbReference>
<dbReference type="GO" id="GO:0001227">
    <property type="term" value="F:DNA-binding transcription repressor activity, RNA polymerase II-specific"/>
    <property type="evidence" value="ECO:0007669"/>
    <property type="project" value="Ensembl"/>
</dbReference>
<dbReference type="GO" id="GO:0000977">
    <property type="term" value="F:RNA polymerase II transcription regulatory region sequence-specific DNA binding"/>
    <property type="evidence" value="ECO:0007669"/>
    <property type="project" value="Ensembl"/>
</dbReference>
<dbReference type="GO" id="GO:0008270">
    <property type="term" value="F:zinc ion binding"/>
    <property type="evidence" value="ECO:0007669"/>
    <property type="project" value="UniProtKB-KW"/>
</dbReference>
<dbReference type="GO" id="GO:0001662">
    <property type="term" value="P:behavioral fear response"/>
    <property type="evidence" value="ECO:0000315"/>
    <property type="project" value="UniProtKB"/>
</dbReference>
<dbReference type="GO" id="GO:0048706">
    <property type="term" value="P:embryonic skeletal system development"/>
    <property type="evidence" value="ECO:0000315"/>
    <property type="project" value="UniProtKB"/>
</dbReference>
<dbReference type="GO" id="GO:0001843">
    <property type="term" value="P:neural tube closure"/>
    <property type="evidence" value="ECO:0000315"/>
    <property type="project" value="UniProtKB"/>
</dbReference>
<dbReference type="GO" id="GO:0045893">
    <property type="term" value="P:positive regulation of DNA-templated transcription"/>
    <property type="evidence" value="ECO:0007669"/>
    <property type="project" value="Ensembl"/>
</dbReference>
<dbReference type="GO" id="GO:0033599">
    <property type="term" value="P:regulation of mammary gland epithelial cell proliferation"/>
    <property type="evidence" value="ECO:0000315"/>
    <property type="project" value="UniProtKB"/>
</dbReference>
<dbReference type="GO" id="GO:0006357">
    <property type="term" value="P:regulation of transcription by RNA polymerase II"/>
    <property type="evidence" value="ECO:0000314"/>
    <property type="project" value="MGI"/>
</dbReference>
<dbReference type="GO" id="GO:0008542">
    <property type="term" value="P:visual learning"/>
    <property type="evidence" value="ECO:0000315"/>
    <property type="project" value="UniProtKB"/>
</dbReference>
<dbReference type="FunFam" id="3.10.390.10:FF:000004">
    <property type="entry name" value="Deformed epidermal autoregulatory factor 1"/>
    <property type="match status" value="1"/>
</dbReference>
<dbReference type="FunFam" id="6.10.140.2220:FF:000008">
    <property type="entry name" value="Deformed epidermal autoregulatory factor 1"/>
    <property type="match status" value="1"/>
</dbReference>
<dbReference type="Gene3D" id="6.10.140.2220">
    <property type="match status" value="1"/>
</dbReference>
<dbReference type="Gene3D" id="3.10.390.10">
    <property type="entry name" value="SAND domain-like"/>
    <property type="match status" value="1"/>
</dbReference>
<dbReference type="InterPro" id="IPR010919">
    <property type="entry name" value="SAND-like_dom_sf"/>
</dbReference>
<dbReference type="InterPro" id="IPR000770">
    <property type="entry name" value="SAND_dom"/>
</dbReference>
<dbReference type="InterPro" id="IPR024119">
    <property type="entry name" value="TF_DEAF-1"/>
</dbReference>
<dbReference type="InterPro" id="IPR002893">
    <property type="entry name" value="Znf_MYND"/>
</dbReference>
<dbReference type="PANTHER" id="PTHR10237:SF1">
    <property type="entry name" value="DEFORMED EPIDERMAL AUTOREGULATORY FACTOR 1 HOMOLOG"/>
    <property type="match status" value="1"/>
</dbReference>
<dbReference type="PANTHER" id="PTHR10237">
    <property type="entry name" value="DEFORMED EPIDERMAL AUTOREGULATORY FACTOR 1 HOMOLOG SUPPRESSIN"/>
    <property type="match status" value="1"/>
</dbReference>
<dbReference type="Pfam" id="PF01342">
    <property type="entry name" value="SAND"/>
    <property type="match status" value="1"/>
</dbReference>
<dbReference type="Pfam" id="PF01753">
    <property type="entry name" value="zf-MYND"/>
    <property type="match status" value="1"/>
</dbReference>
<dbReference type="SMART" id="SM00258">
    <property type="entry name" value="SAND"/>
    <property type="match status" value="1"/>
</dbReference>
<dbReference type="SUPFAM" id="SSF144232">
    <property type="entry name" value="HIT/MYND zinc finger-like"/>
    <property type="match status" value="1"/>
</dbReference>
<dbReference type="SUPFAM" id="SSF63763">
    <property type="entry name" value="SAND domain-like"/>
    <property type="match status" value="1"/>
</dbReference>
<dbReference type="PROSITE" id="PS50864">
    <property type="entry name" value="SAND"/>
    <property type="match status" value="1"/>
</dbReference>
<dbReference type="PROSITE" id="PS01360">
    <property type="entry name" value="ZF_MYND_1"/>
    <property type="match status" value="1"/>
</dbReference>
<dbReference type="PROSITE" id="PS50865">
    <property type="entry name" value="ZF_MYND_2"/>
    <property type="match status" value="1"/>
</dbReference>
<sequence length="566" mass="59633">MEDSDSAAKQLGLAEAAAVAAAAAVAAAAAAAAESEAEEPVLSRDEDSEEDADSEAERETRRVTAVAVMAAESGHMDMGTEALPSPDEAAAAAAAFAEVTTVTVANVGSSADNVFTTSVANAASISGHVLSGRTALQIGDSLNTEKATLIVVHTDGSIVETTGLKGPAAPLTPGPQSPPTPLAPGQEKGGTKYNWDPSVYDSELPVRCRNISGTLYKSRLGSGGRGRCIKQGENWYSPTEFEAMAGRASSKDWKRSIRYAGRPLQCLIQDGILNPHAASCTCAACCDDMTLSGPVRLFVPYKRRKKENELPTTPVKKDSPKNITLLPATAATTFTVTPSGQITTSGALTFDRASTVEATAVISESPAQGDVFAGATVQEAGVQPPCRVGHPEPHYPGYQDSCQIAPFPEAALPTSHPKIVLTSLPALAVPPSTPTKAVSPTVVSGLEMSEHRSWLYLEEMVNSLLNTAQQLKTLFEQAKQASSCREAAVTQARMQVDTERKEQSCVNCGREAMSECTGCHKVNYCSTFCQRKDWKDHQHVCGQSASVTVQADDVHVEESVIEKVAV</sequence>
<gene>
    <name type="primary">Deaf1</name>
</gene>
<comment type="function">
    <text evidence="2 8 9 10 12">Transcription factor that binds to sequence with multiple copies of 5'-TTC[CG]G-3' present in its own promoter and that of the HNRPA2B1 gene. Down-regulates transcription of these genes. Binds to the retinoic acid response element (RARE) 5'-AGGGTTCACCGAAAGTTCA-3'. Activates the proenkephalin gene independently of promoter binding, probably through protein-protein interaction (By similarity). Regulates epithelial cell proliferation and side-branching in the mammary gland. Required for neural tube closure and skeletal patterning. Controls the expression of peripheral tissue antigens in pancreatic lymph nodes. Isoform 1 displays greater transcriptional activity than isoform 2. Isoform 2 may inhibit transcriptional activity of isoform 1 by interacting with it and retaining it in the cytoplasm. Transcriptional activator of EIF4G3 (By similarity). May also involved in behavior (PubMed:24726472).</text>
</comment>
<comment type="subunit">
    <text evidence="1 11 13">Homodimer (By similarity). Isoform 1 and isoform 2 may form a heterodimer. May interact with the corepressors NCOR1 and NCRO2 (By similarity). Identified in a complex with XRCC5 and XRCC6. Interacts (via the SAND domain) with the DNA-PK complex subunit XRCC6; the interaction is direct with XRCC6 and may be inhibited by DNA-binding (By similarity). Interacts with LMO4; LMO4 blocks export from nucleus. Interacts with LMO2 and CLIM2.</text>
</comment>
<comment type="interaction">
    <interactant intactId="EBI-2364863">
        <id>Q9Z1T5</id>
    </interactant>
    <interactant intactId="EBI-1188816">
        <id>Q9Z2D6</id>
        <label>Mecp2</label>
    </interactant>
    <organismsDiffer>false</organismsDiffer>
    <experiments>2</experiments>
</comment>
<comment type="subcellular location">
    <molecule>Isoform 1</molecule>
    <subcellularLocation>
        <location>Nucleus</location>
    </subcellularLocation>
    <subcellularLocation>
        <location evidence="1">Cytoplasm</location>
    </subcellularLocation>
</comment>
<comment type="subcellular location">
    <molecule>Isoform 2</molecule>
    <subcellularLocation>
        <location>Cytoplasm</location>
    </subcellularLocation>
    <subcellularLocation>
        <location>Nucleus</location>
    </subcellularLocation>
    <text>Displays some nuclear localization when expressed with isoform 1, suggesting that it may heterodimerize with isoform 1 and shuttle to the nucleus using the nuclear localization signal of isoform 1.</text>
</comment>
<comment type="alternative products">
    <event type="alternative splicing"/>
    <isoform>
        <id>Q9Z1T5-1</id>
        <name>1</name>
        <name>DF1</name>
        <sequence type="displayed"/>
    </isoform>
    <isoform>
        <id>Q9Z1T5-2</id>
        <name>2</name>
        <name>DF1-VAR1</name>
        <sequence type="described" ref="VSP_038703 VSP_038704 VSP_038705"/>
    </isoform>
</comment>
<comment type="tissue specificity">
    <text evidence="13">Ubiquitously expressed during embryogenesis, with higher expression in regions of the central nervous system, dorsal root ganglia, submandibular gland, epidermis and breast. In 12-week-old NOD mice, expression of isoform 2 is sevenfold higher in lymph node stromal elements than in T-cells and tenfold higher than in B-cells.</text>
</comment>
<comment type="developmental stage">
    <text evidence="9 10">Expressed at all stages of mammary gland development with slightly higher levels observed during pregnancy and lactation. At 4 weeks, expression levels of isoform 1 and isoform 2 do not differ in pancreatic lymph nodes of nonobese diabetic (NOD) mice compared to NOD.B10 mice which do not develop diabetes. However, at 12 weeks, expression of isoform 1 is down-regulated while expression of isoform 2 is up-regulated in NOD mice but not in NOD.B10. There is no difference in expression levels at 12 weeks in spleen.</text>
</comment>
<comment type="PTM">
    <text evidence="1">May be phosphorylated by DNA-PK complex in a DNA independent manner (in vitro).</text>
</comment>
<comment type="disruption phenotype">
    <text evidence="8 12">Exencephaly and skeletal abnormalities in the rib cage and cervical vertebrae but no presphenoid bone or cranial nerve defects. DEAF1 homozygous mice neonates die 100% of the time and DEAF1 heterozygous mice survived in a 2:1 ratio.</text>
</comment>
<reference key="1">
    <citation type="journal article" date="1998" name="Proc. Natl. Acad. Sci. U.S.A.">
        <title>Mouse deformed epidermal autoregulatory factor 1 recruits a LIM domain factor, LMO-4, and CLIM coregulators.</title>
        <authorList>
            <person name="Sugihara T.M."/>
            <person name="Bach I."/>
            <person name="Kioussi C."/>
            <person name="Rosenfeld M.G."/>
            <person name="Andersen B."/>
        </authorList>
    </citation>
    <scope>NUCLEOTIDE SEQUENCE [MRNA] (ISOFORM 1)</scope>
    <scope>INTERACTION WITH CLIM2; LMO2 AND LMO4</scope>
    <scope>TISSUE SPECIFICITY</scope>
    <source>
        <tissue>Pituitary</tissue>
        <tissue>Skin</tissue>
    </source>
</reference>
<reference key="2">
    <citation type="journal article" date="2009" name="Nat. Immunol.">
        <title>Deaf1 isoforms control the expression of genes encoding peripheral tissue antigens in the pancreatic lymph nodes during type 1 diabetes.</title>
        <authorList>
            <person name="Yip L."/>
            <person name="Su L."/>
            <person name="Sheng D."/>
            <person name="Chang P."/>
            <person name="Atkinson M."/>
            <person name="Czesak M."/>
            <person name="Albert P.R."/>
            <person name="Collier A.R."/>
            <person name="Turley S.J."/>
            <person name="Fathman C.G."/>
            <person name="Creusot R.J."/>
        </authorList>
    </citation>
    <scope>NUCLEOTIDE SEQUENCE [MRNA] (ISOFORMS 1 AND 2)</scope>
    <scope>FUNCTION</scope>
    <scope>SUBCELLULAR LOCATION</scope>
    <scope>DEVELOPMENTAL STAGE</scope>
    <source>
        <strain>NOD</strain>
        <tissue>Pancreas</tissue>
    </source>
</reference>
<reference key="3">
    <citation type="journal article" date="2005" name="Science">
        <title>The transcriptional landscape of the mammalian genome.</title>
        <authorList>
            <person name="Carninci P."/>
            <person name="Kasukawa T."/>
            <person name="Katayama S."/>
            <person name="Gough J."/>
            <person name="Frith M.C."/>
            <person name="Maeda N."/>
            <person name="Oyama R."/>
            <person name="Ravasi T."/>
            <person name="Lenhard B."/>
            <person name="Wells C."/>
            <person name="Kodzius R."/>
            <person name="Shimokawa K."/>
            <person name="Bajic V.B."/>
            <person name="Brenner S.E."/>
            <person name="Batalov S."/>
            <person name="Forrest A.R."/>
            <person name="Zavolan M."/>
            <person name="Davis M.J."/>
            <person name="Wilming L.G."/>
            <person name="Aidinis V."/>
            <person name="Allen J.E."/>
            <person name="Ambesi-Impiombato A."/>
            <person name="Apweiler R."/>
            <person name="Aturaliya R.N."/>
            <person name="Bailey T.L."/>
            <person name="Bansal M."/>
            <person name="Baxter L."/>
            <person name="Beisel K.W."/>
            <person name="Bersano T."/>
            <person name="Bono H."/>
            <person name="Chalk A.M."/>
            <person name="Chiu K.P."/>
            <person name="Choudhary V."/>
            <person name="Christoffels A."/>
            <person name="Clutterbuck D.R."/>
            <person name="Crowe M.L."/>
            <person name="Dalla E."/>
            <person name="Dalrymple B.P."/>
            <person name="de Bono B."/>
            <person name="Della Gatta G."/>
            <person name="di Bernardo D."/>
            <person name="Down T."/>
            <person name="Engstrom P."/>
            <person name="Fagiolini M."/>
            <person name="Faulkner G."/>
            <person name="Fletcher C.F."/>
            <person name="Fukushima T."/>
            <person name="Furuno M."/>
            <person name="Futaki S."/>
            <person name="Gariboldi M."/>
            <person name="Georgii-Hemming P."/>
            <person name="Gingeras T.R."/>
            <person name="Gojobori T."/>
            <person name="Green R.E."/>
            <person name="Gustincich S."/>
            <person name="Harbers M."/>
            <person name="Hayashi Y."/>
            <person name="Hensch T.K."/>
            <person name="Hirokawa N."/>
            <person name="Hill D."/>
            <person name="Huminiecki L."/>
            <person name="Iacono M."/>
            <person name="Ikeo K."/>
            <person name="Iwama A."/>
            <person name="Ishikawa T."/>
            <person name="Jakt M."/>
            <person name="Kanapin A."/>
            <person name="Katoh M."/>
            <person name="Kawasawa Y."/>
            <person name="Kelso J."/>
            <person name="Kitamura H."/>
            <person name="Kitano H."/>
            <person name="Kollias G."/>
            <person name="Krishnan S.P."/>
            <person name="Kruger A."/>
            <person name="Kummerfeld S.K."/>
            <person name="Kurochkin I.V."/>
            <person name="Lareau L.F."/>
            <person name="Lazarevic D."/>
            <person name="Lipovich L."/>
            <person name="Liu J."/>
            <person name="Liuni S."/>
            <person name="McWilliam S."/>
            <person name="Madan Babu M."/>
            <person name="Madera M."/>
            <person name="Marchionni L."/>
            <person name="Matsuda H."/>
            <person name="Matsuzawa S."/>
            <person name="Miki H."/>
            <person name="Mignone F."/>
            <person name="Miyake S."/>
            <person name="Morris K."/>
            <person name="Mottagui-Tabar S."/>
            <person name="Mulder N."/>
            <person name="Nakano N."/>
            <person name="Nakauchi H."/>
            <person name="Ng P."/>
            <person name="Nilsson R."/>
            <person name="Nishiguchi S."/>
            <person name="Nishikawa S."/>
            <person name="Nori F."/>
            <person name="Ohara O."/>
            <person name="Okazaki Y."/>
            <person name="Orlando V."/>
            <person name="Pang K.C."/>
            <person name="Pavan W.J."/>
            <person name="Pavesi G."/>
            <person name="Pesole G."/>
            <person name="Petrovsky N."/>
            <person name="Piazza S."/>
            <person name="Reed J."/>
            <person name="Reid J.F."/>
            <person name="Ring B.Z."/>
            <person name="Ringwald M."/>
            <person name="Rost B."/>
            <person name="Ruan Y."/>
            <person name="Salzberg S.L."/>
            <person name="Sandelin A."/>
            <person name="Schneider C."/>
            <person name="Schoenbach C."/>
            <person name="Sekiguchi K."/>
            <person name="Semple C.A."/>
            <person name="Seno S."/>
            <person name="Sessa L."/>
            <person name="Sheng Y."/>
            <person name="Shibata Y."/>
            <person name="Shimada H."/>
            <person name="Shimada K."/>
            <person name="Silva D."/>
            <person name="Sinclair B."/>
            <person name="Sperling S."/>
            <person name="Stupka E."/>
            <person name="Sugiura K."/>
            <person name="Sultana R."/>
            <person name="Takenaka Y."/>
            <person name="Taki K."/>
            <person name="Tammoja K."/>
            <person name="Tan S.L."/>
            <person name="Tang S."/>
            <person name="Taylor M.S."/>
            <person name="Tegner J."/>
            <person name="Teichmann S.A."/>
            <person name="Ueda H.R."/>
            <person name="van Nimwegen E."/>
            <person name="Verardo R."/>
            <person name="Wei C.L."/>
            <person name="Yagi K."/>
            <person name="Yamanishi H."/>
            <person name="Zabarovsky E."/>
            <person name="Zhu S."/>
            <person name="Zimmer A."/>
            <person name="Hide W."/>
            <person name="Bult C."/>
            <person name="Grimmond S.M."/>
            <person name="Teasdale R.D."/>
            <person name="Liu E.T."/>
            <person name="Brusic V."/>
            <person name="Quackenbush J."/>
            <person name="Wahlestedt C."/>
            <person name="Mattick J.S."/>
            <person name="Hume D.A."/>
            <person name="Kai C."/>
            <person name="Sasaki D."/>
            <person name="Tomaru Y."/>
            <person name="Fukuda S."/>
            <person name="Kanamori-Katayama M."/>
            <person name="Suzuki M."/>
            <person name="Aoki J."/>
            <person name="Arakawa T."/>
            <person name="Iida J."/>
            <person name="Imamura K."/>
            <person name="Itoh M."/>
            <person name="Kato T."/>
            <person name="Kawaji H."/>
            <person name="Kawagashira N."/>
            <person name="Kawashima T."/>
            <person name="Kojima M."/>
            <person name="Kondo S."/>
            <person name="Konno H."/>
            <person name="Nakano K."/>
            <person name="Ninomiya N."/>
            <person name="Nishio T."/>
            <person name="Okada M."/>
            <person name="Plessy C."/>
            <person name="Shibata K."/>
            <person name="Shiraki T."/>
            <person name="Suzuki S."/>
            <person name="Tagami M."/>
            <person name="Waki K."/>
            <person name="Watahiki A."/>
            <person name="Okamura-Oho Y."/>
            <person name="Suzuki H."/>
            <person name="Kawai J."/>
            <person name="Hayashizaki Y."/>
        </authorList>
    </citation>
    <scope>NUCLEOTIDE SEQUENCE [LARGE SCALE MRNA] (ISOFORM 1)</scope>
    <source>
        <strain>C57BL/6J</strain>
        <tissue>Kidney</tissue>
    </source>
</reference>
<reference key="4">
    <citation type="submission" date="2005-07" db="EMBL/GenBank/DDBJ databases">
        <authorList>
            <person name="Mural R.J."/>
            <person name="Adams M.D."/>
            <person name="Myers E.W."/>
            <person name="Smith H.O."/>
            <person name="Venter J.C."/>
        </authorList>
    </citation>
    <scope>NUCLEOTIDE SEQUENCE [LARGE SCALE GENOMIC DNA]</scope>
</reference>
<reference key="5">
    <citation type="journal article" date="2004" name="Mol. Cell. Biol.">
        <title>Defective neural tube closure and anteroposterior patterning in mice lacking the LIM protein LMO4 or its interacting partner Deaf-1.</title>
        <authorList>
            <person name="Hahm K."/>
            <person name="Sum E.Y."/>
            <person name="Fujiwara Y."/>
            <person name="Lindeman G.J."/>
            <person name="Visvader J.E."/>
            <person name="Orkin S.H."/>
        </authorList>
    </citation>
    <scope>FUNCTION</scope>
    <scope>DISRUPTION PHENOTYPE</scope>
</reference>
<reference key="6">
    <citation type="journal article" date="2008" name="BMC Dev. Biol.">
        <title>Deaf-1 regulates epithelial cell proliferation and side-branching in the mammary gland.</title>
        <authorList>
            <person name="Barker H.E."/>
            <person name="Smyth G.K."/>
            <person name="Wettenhall J."/>
            <person name="Ward T.A."/>
            <person name="Bath M.L."/>
            <person name="Lindeman G.J."/>
            <person name="Visvader J.E."/>
        </authorList>
    </citation>
    <scope>FUNCTION</scope>
    <scope>DEVELOPMENTAL STAGE</scope>
</reference>
<reference key="7">
    <citation type="journal article" date="2010" name="Cell">
        <title>A tissue-specific atlas of mouse protein phosphorylation and expression.</title>
        <authorList>
            <person name="Huttlin E.L."/>
            <person name="Jedrychowski M.P."/>
            <person name="Elias J.E."/>
            <person name="Goswami T."/>
            <person name="Rad R."/>
            <person name="Beausoleil S.A."/>
            <person name="Villen J."/>
            <person name="Haas W."/>
            <person name="Sowa M.E."/>
            <person name="Gygi S.P."/>
        </authorList>
    </citation>
    <scope>PHOSPHORYLATION [LARGE SCALE ANALYSIS] AT THR-172; SER-177 AND THR-180</scope>
    <scope>IDENTIFICATION BY MASS SPECTROMETRY [LARGE SCALE ANALYSIS]</scope>
    <source>
        <tissue>Kidney</tissue>
        <tissue>Lung</tissue>
        <tissue>Spleen</tissue>
    </source>
</reference>
<reference key="8">
    <citation type="journal article" date="2012" name="PLoS ONE">
        <title>Contribution of DEAF1 structural domains to the interaction with the breast cancer oncogene LMO4.</title>
        <authorList>
            <person name="Cubeddu L."/>
            <person name="Joseph S."/>
            <person name="Richard D.J."/>
            <person name="Matthews J.M."/>
        </authorList>
    </citation>
    <scope>INTERACTION WITH LMO4</scope>
    <scope>SUBUNIT</scope>
    <scope>SUBCELLULAR LOCATION</scope>
    <scope>MUTAGENESIS OF LYS-305</scope>
</reference>
<reference key="9">
    <citation type="journal article" date="2014" name="Am. J. Hum. Genet.">
        <title>Mutations affecting the SAND domain of DEAF1 cause intellectual disability with severe speech impairment and behavioral problems.</title>
        <authorList>
            <person name="Vulto-van Silfhout A.T."/>
            <person name="Rajamanickam S."/>
            <person name="Jensik P.J."/>
            <person name="Vergult S."/>
            <person name="de Rocker N."/>
            <person name="Newhall K.J."/>
            <person name="Raghavan R."/>
            <person name="Reardon S.N."/>
            <person name="Jarrett K."/>
            <person name="McIntyre T."/>
            <person name="Bulinski J."/>
            <person name="Ownby S.L."/>
            <person name="Huggenvik J.I."/>
            <person name="McKnight G.S."/>
            <person name="Rose G.M."/>
            <person name="Cai X."/>
            <person name="Willaert A."/>
            <person name="Zweier C."/>
            <person name="Endele S."/>
            <person name="de Ligt J."/>
            <person name="van Bon B.W."/>
            <person name="Lugtenberg D."/>
            <person name="de Vries P.F."/>
            <person name="Veltman J.A."/>
            <person name="van Bokhoven H."/>
            <person name="Brunner H.G."/>
            <person name="Rauch A."/>
            <person name="de Brouwer A.P."/>
            <person name="Carvill G.L."/>
            <person name="Hoischen A."/>
            <person name="Mefford H.C."/>
            <person name="Eichler E.E."/>
            <person name="Vissers L.E."/>
            <person name="Menten B."/>
            <person name="Collard M.W."/>
            <person name="de Vries B.B."/>
        </authorList>
    </citation>
    <scope>FUNCTION</scope>
    <scope>DISRUPTION PHENOTYPE</scope>
</reference>
<keyword id="KW-0002">3D-structure</keyword>
<keyword id="KW-0025">Alternative splicing</keyword>
<keyword id="KW-0963">Cytoplasm</keyword>
<keyword id="KW-0217">Developmental protein</keyword>
<keyword id="KW-0238">DNA-binding</keyword>
<keyword id="KW-0479">Metal-binding</keyword>
<keyword id="KW-0524">Neurogenesis</keyword>
<keyword id="KW-0539">Nucleus</keyword>
<keyword id="KW-0597">Phosphoprotein</keyword>
<keyword id="KW-1185">Reference proteome</keyword>
<keyword id="KW-0804">Transcription</keyword>
<keyword id="KW-0805">Transcription regulation</keyword>
<keyword id="KW-0862">Zinc</keyword>
<keyword id="KW-0863">Zinc-finger</keyword>
<proteinExistence type="evidence at protein level"/>
<accession>Q9Z1T5</accession>
<accession>C7SHZ9</accession>
<accession>Q3UJA4</accession>
<protein>
    <recommendedName>
        <fullName>Deformed epidermal autoregulatory factor 1 homolog</fullName>
    </recommendedName>
    <alternativeName>
        <fullName>Nuclear DEAF-1-related transcriptional regulator</fullName>
        <shortName>NUDR</shortName>
    </alternativeName>
</protein>